<evidence type="ECO:0000255" key="1">
    <source>
        <dbReference type="HAMAP-Rule" id="MF_00445"/>
    </source>
</evidence>
<organism>
    <name type="scientific">Desulfovibrio desulfuricans (strain ATCC 27774 / DSM 6949 / MB)</name>
    <dbReference type="NCBI Taxonomy" id="525146"/>
    <lineage>
        <taxon>Bacteria</taxon>
        <taxon>Pseudomonadati</taxon>
        <taxon>Thermodesulfobacteriota</taxon>
        <taxon>Desulfovibrionia</taxon>
        <taxon>Desulfovibrionales</taxon>
        <taxon>Desulfovibrionaceae</taxon>
        <taxon>Desulfovibrio</taxon>
    </lineage>
</organism>
<name>NUON_DESDA</name>
<reference key="1">
    <citation type="submission" date="2009-01" db="EMBL/GenBank/DDBJ databases">
        <title>Complete sequence of Desulfovibrio desulfuricans subsp. desulfuricans str. ATCC 27774.</title>
        <authorList>
            <consortium name="US DOE Joint Genome Institute"/>
            <person name="Lucas S."/>
            <person name="Copeland A."/>
            <person name="Lapidus A."/>
            <person name="Glavina del Rio T."/>
            <person name="Tice H."/>
            <person name="Bruce D."/>
            <person name="Goodwin L."/>
            <person name="Pitluck S."/>
            <person name="Sims D."/>
            <person name="Lu M."/>
            <person name="Kiss H."/>
            <person name="Meineke L."/>
            <person name="Brettin T."/>
            <person name="Detter J.C."/>
            <person name="Han C."/>
            <person name="Larimer F."/>
            <person name="Land M."/>
            <person name="Hauser L."/>
            <person name="Kyrpides N."/>
            <person name="Ovchinnikova G."/>
            <person name="Hazen T.C."/>
        </authorList>
    </citation>
    <scope>NUCLEOTIDE SEQUENCE [LARGE SCALE GENOMIC DNA]</scope>
    <source>
        <strain>ATCC 27774 / DSM 6949 / MB</strain>
    </source>
</reference>
<sequence>MTDTVIAPLSALPLLADLPALAPELVLLVTAVCLMLGDLFYPRERVFQQWLTAAGAAVALALTLSMNFSGGATAFGGVFRADGLAAAFKVVCLAALGLTALMSEAFCRHASMRQGEYYSLMAFSTLGMCVMVSAGDAIVLYLGLELMALPIYALVALRTADPRSSEAAIKYFLMGSFASALLLFGLSILYGLTGQTDIAEMAHRLAVSLSVSDMHTLPAAVVALGLVLAGLGFKVATVPFHVWAPDVYEGAPTTVTAFMSVAAKTASFAVLGRVLLQGLPQLSPLWSDALAGLAVLTMLLGNIAALAQTSLKRMLAYSAIAHAGYALLGLAACTPEGLRATAAYLTIYLCMNIGAFAVIIYLSARSGRGRMGEGPDAGEDLDDYRGLAARSPLLAAVMLVFLFSLTGIPPTAGFMGKFMLFRAAFAAGYQITVVVAVVCSTISAWYYLGVAKRMYMQDSQDDAPATSCAITGETGLQAVLAVCLAGAVLWGIFPQSLLFWINVYF</sequence>
<proteinExistence type="inferred from homology"/>
<gene>
    <name evidence="1" type="primary">nuoN</name>
    <name type="ordered locus">Ddes_1655</name>
</gene>
<feature type="chain" id="PRO_0000391140" description="NADH-quinone oxidoreductase subunit N">
    <location>
        <begin position="1"/>
        <end position="505"/>
    </location>
</feature>
<feature type="transmembrane region" description="Helical" evidence="1">
    <location>
        <begin position="20"/>
        <end position="40"/>
    </location>
</feature>
<feature type="transmembrane region" description="Helical" evidence="1">
    <location>
        <begin position="59"/>
        <end position="79"/>
    </location>
</feature>
<feature type="transmembrane region" description="Helical" evidence="1">
    <location>
        <begin position="83"/>
        <end position="103"/>
    </location>
</feature>
<feature type="transmembrane region" description="Helical" evidence="1">
    <location>
        <begin position="115"/>
        <end position="135"/>
    </location>
</feature>
<feature type="transmembrane region" description="Helical" evidence="1">
    <location>
        <begin position="137"/>
        <end position="157"/>
    </location>
</feature>
<feature type="transmembrane region" description="Helical" evidence="1">
    <location>
        <begin position="172"/>
        <end position="192"/>
    </location>
</feature>
<feature type="transmembrane region" description="Helical" evidence="1">
    <location>
        <begin position="220"/>
        <end position="240"/>
    </location>
</feature>
<feature type="transmembrane region" description="Helical" evidence="1">
    <location>
        <begin position="251"/>
        <end position="271"/>
    </location>
</feature>
<feature type="transmembrane region" description="Helical" evidence="1">
    <location>
        <begin position="285"/>
        <end position="305"/>
    </location>
</feature>
<feature type="transmembrane region" description="Helical" evidence="1">
    <location>
        <begin position="314"/>
        <end position="334"/>
    </location>
</feature>
<feature type="transmembrane region" description="Helical" evidence="1">
    <location>
        <begin position="342"/>
        <end position="362"/>
    </location>
</feature>
<feature type="transmembrane region" description="Helical" evidence="1">
    <location>
        <begin position="394"/>
        <end position="414"/>
    </location>
</feature>
<feature type="transmembrane region" description="Helical" evidence="1">
    <location>
        <begin position="431"/>
        <end position="451"/>
    </location>
</feature>
<feature type="transmembrane region" description="Helical" evidence="1">
    <location>
        <begin position="481"/>
        <end position="501"/>
    </location>
</feature>
<protein>
    <recommendedName>
        <fullName evidence="1">NADH-quinone oxidoreductase subunit N</fullName>
        <ecNumber evidence="1">7.1.1.-</ecNumber>
    </recommendedName>
    <alternativeName>
        <fullName evidence="1">NADH dehydrogenase I subunit N</fullName>
    </alternativeName>
    <alternativeName>
        <fullName evidence="1">NDH-1 subunit N</fullName>
    </alternativeName>
</protein>
<dbReference type="EC" id="7.1.1.-" evidence="1"/>
<dbReference type="EMBL" id="CP001358">
    <property type="protein sequence ID" value="ACL49554.1"/>
    <property type="molecule type" value="Genomic_DNA"/>
</dbReference>
<dbReference type="SMR" id="B8J1C7"/>
<dbReference type="STRING" id="525146.Ddes_1655"/>
<dbReference type="KEGG" id="dds:Ddes_1655"/>
<dbReference type="eggNOG" id="COG1007">
    <property type="taxonomic scope" value="Bacteria"/>
</dbReference>
<dbReference type="HOGENOM" id="CLU_007100_1_5_7"/>
<dbReference type="GO" id="GO:0005886">
    <property type="term" value="C:plasma membrane"/>
    <property type="evidence" value="ECO:0007669"/>
    <property type="project" value="UniProtKB-SubCell"/>
</dbReference>
<dbReference type="GO" id="GO:0008137">
    <property type="term" value="F:NADH dehydrogenase (ubiquinone) activity"/>
    <property type="evidence" value="ECO:0007669"/>
    <property type="project" value="InterPro"/>
</dbReference>
<dbReference type="GO" id="GO:0050136">
    <property type="term" value="F:NADH:ubiquinone reductase (non-electrogenic) activity"/>
    <property type="evidence" value="ECO:0007669"/>
    <property type="project" value="UniProtKB-UniRule"/>
</dbReference>
<dbReference type="GO" id="GO:0048038">
    <property type="term" value="F:quinone binding"/>
    <property type="evidence" value="ECO:0007669"/>
    <property type="project" value="UniProtKB-KW"/>
</dbReference>
<dbReference type="GO" id="GO:0042773">
    <property type="term" value="P:ATP synthesis coupled electron transport"/>
    <property type="evidence" value="ECO:0007669"/>
    <property type="project" value="InterPro"/>
</dbReference>
<dbReference type="HAMAP" id="MF_00445">
    <property type="entry name" value="NDH1_NuoN_1"/>
    <property type="match status" value="1"/>
</dbReference>
<dbReference type="InterPro" id="IPR010096">
    <property type="entry name" value="NADH-Q_OxRdtase_suN/2"/>
</dbReference>
<dbReference type="InterPro" id="IPR001750">
    <property type="entry name" value="ND/Mrp_TM"/>
</dbReference>
<dbReference type="NCBIfam" id="TIGR01770">
    <property type="entry name" value="NDH_I_N"/>
    <property type="match status" value="1"/>
</dbReference>
<dbReference type="PANTHER" id="PTHR22773">
    <property type="entry name" value="NADH DEHYDROGENASE"/>
    <property type="match status" value="1"/>
</dbReference>
<dbReference type="Pfam" id="PF00361">
    <property type="entry name" value="Proton_antipo_M"/>
    <property type="match status" value="1"/>
</dbReference>
<comment type="function">
    <text evidence="1">NDH-1 shuttles electrons from NADH, via FMN and iron-sulfur (Fe-S) centers, to quinones in the respiratory chain. The immediate electron acceptor for the enzyme in this species is believed to be ubiquinone. Couples the redox reaction to proton translocation (for every two electrons transferred, four hydrogen ions are translocated across the cytoplasmic membrane), and thus conserves the redox energy in a proton gradient.</text>
</comment>
<comment type="catalytic activity">
    <reaction evidence="1">
        <text>a quinone + NADH + 5 H(+)(in) = a quinol + NAD(+) + 4 H(+)(out)</text>
        <dbReference type="Rhea" id="RHEA:57888"/>
        <dbReference type="ChEBI" id="CHEBI:15378"/>
        <dbReference type="ChEBI" id="CHEBI:24646"/>
        <dbReference type="ChEBI" id="CHEBI:57540"/>
        <dbReference type="ChEBI" id="CHEBI:57945"/>
        <dbReference type="ChEBI" id="CHEBI:132124"/>
    </reaction>
</comment>
<comment type="subunit">
    <text evidence="1">NDH-1 is composed of 14 different subunits. Subunits NuoA, H, J, K, L, M, N constitute the membrane sector of the complex.</text>
</comment>
<comment type="subcellular location">
    <subcellularLocation>
        <location evidence="1">Cell inner membrane</location>
        <topology evidence="1">Multi-pass membrane protein</topology>
    </subcellularLocation>
</comment>
<comment type="similarity">
    <text evidence="1">Belongs to the complex I subunit 2 family.</text>
</comment>
<accession>B8J1C7</accession>
<keyword id="KW-0997">Cell inner membrane</keyword>
<keyword id="KW-1003">Cell membrane</keyword>
<keyword id="KW-0472">Membrane</keyword>
<keyword id="KW-0520">NAD</keyword>
<keyword id="KW-0874">Quinone</keyword>
<keyword id="KW-1278">Translocase</keyword>
<keyword id="KW-0812">Transmembrane</keyword>
<keyword id="KW-1133">Transmembrane helix</keyword>
<keyword id="KW-0813">Transport</keyword>
<keyword id="KW-0830">Ubiquinone</keyword>